<proteinExistence type="inferred from homology"/>
<name>ACCA_STRPJ</name>
<accession>B8ZLJ3</accession>
<sequence length="255" mass="28234">MNIAKIVREAREQSRLTTLDFATGIFDEFIQLHGDRSFRDDGAVVGGIGWLGDQAVTVVGIQKGKSLQDNLKRNFGQPHPEGYRKALRLMKQAEKFGRPVVTFINTAGAYPGVGAEERGQGEAIARNLMEMSDLKVPIIAIIIGEGGSGGALALAVADRVWMLENSIYAILSPEGFASILWKDGTRAMEAAELMKITSHELLEMDVVDKVISEVGLSSKELIKSVKKELQTELARLSQKPLEELLEERYQRFRKY</sequence>
<protein>
    <recommendedName>
        <fullName evidence="1">Acetyl-coenzyme A carboxylase carboxyl transferase subunit alpha</fullName>
        <shortName evidence="1">ACCase subunit alpha</shortName>
        <shortName evidence="1">Acetyl-CoA carboxylase carboxyltransferase subunit alpha</shortName>
        <ecNumber evidence="1">2.1.3.15</ecNumber>
    </recommendedName>
</protein>
<organism>
    <name type="scientific">Streptococcus pneumoniae (strain ATCC 700669 / Spain 23F-1)</name>
    <dbReference type="NCBI Taxonomy" id="561276"/>
    <lineage>
        <taxon>Bacteria</taxon>
        <taxon>Bacillati</taxon>
        <taxon>Bacillota</taxon>
        <taxon>Bacilli</taxon>
        <taxon>Lactobacillales</taxon>
        <taxon>Streptococcaceae</taxon>
        <taxon>Streptococcus</taxon>
    </lineage>
</organism>
<evidence type="ECO:0000255" key="1">
    <source>
        <dbReference type="HAMAP-Rule" id="MF_00823"/>
    </source>
</evidence>
<evidence type="ECO:0000255" key="2">
    <source>
        <dbReference type="PROSITE-ProRule" id="PRU01137"/>
    </source>
</evidence>
<comment type="function">
    <text evidence="1">Component of the acetyl coenzyme A carboxylase (ACC) complex. First, biotin carboxylase catalyzes the carboxylation of biotin on its carrier protein (BCCP) and then the CO(2) group is transferred by the carboxyltransferase to acetyl-CoA to form malonyl-CoA.</text>
</comment>
<comment type="catalytic activity">
    <reaction evidence="1">
        <text>N(6)-carboxybiotinyl-L-lysyl-[protein] + acetyl-CoA = N(6)-biotinyl-L-lysyl-[protein] + malonyl-CoA</text>
        <dbReference type="Rhea" id="RHEA:54728"/>
        <dbReference type="Rhea" id="RHEA-COMP:10505"/>
        <dbReference type="Rhea" id="RHEA-COMP:10506"/>
        <dbReference type="ChEBI" id="CHEBI:57288"/>
        <dbReference type="ChEBI" id="CHEBI:57384"/>
        <dbReference type="ChEBI" id="CHEBI:83144"/>
        <dbReference type="ChEBI" id="CHEBI:83145"/>
        <dbReference type="EC" id="2.1.3.15"/>
    </reaction>
</comment>
<comment type="pathway">
    <text evidence="1">Lipid metabolism; malonyl-CoA biosynthesis; malonyl-CoA from acetyl-CoA: step 1/1.</text>
</comment>
<comment type="subunit">
    <text evidence="1">Acetyl-CoA carboxylase is a heterohexamer composed of biotin carboxyl carrier protein (AccB), biotin carboxylase (AccC) and two subunits each of ACCase subunit alpha (AccA) and ACCase subunit beta (AccD).</text>
</comment>
<comment type="subcellular location">
    <subcellularLocation>
        <location evidence="1">Cytoplasm</location>
    </subcellularLocation>
</comment>
<comment type="similarity">
    <text evidence="1">Belongs to the AccA family.</text>
</comment>
<feature type="chain" id="PRO_1000148752" description="Acetyl-coenzyme A carboxylase carboxyl transferase subunit alpha">
    <location>
        <begin position="1"/>
        <end position="255"/>
    </location>
</feature>
<feature type="domain" description="CoA carboxyltransferase C-terminal" evidence="2">
    <location>
        <begin position="1"/>
        <end position="235"/>
    </location>
</feature>
<keyword id="KW-0067">ATP-binding</keyword>
<keyword id="KW-0963">Cytoplasm</keyword>
<keyword id="KW-0275">Fatty acid biosynthesis</keyword>
<keyword id="KW-0276">Fatty acid metabolism</keyword>
<keyword id="KW-0444">Lipid biosynthesis</keyword>
<keyword id="KW-0443">Lipid metabolism</keyword>
<keyword id="KW-0547">Nucleotide-binding</keyword>
<keyword id="KW-0808">Transferase</keyword>
<gene>
    <name evidence="1" type="primary">accA</name>
    <name type="ordered locus">SPN23F04020</name>
</gene>
<reference key="1">
    <citation type="journal article" date="2009" name="J. Bacteriol.">
        <title>Role of conjugative elements in the evolution of the multidrug-resistant pandemic clone Streptococcus pneumoniae Spain23F ST81.</title>
        <authorList>
            <person name="Croucher N.J."/>
            <person name="Walker D."/>
            <person name="Romero P."/>
            <person name="Lennard N."/>
            <person name="Paterson G.K."/>
            <person name="Bason N.C."/>
            <person name="Mitchell A.M."/>
            <person name="Quail M.A."/>
            <person name="Andrew P.W."/>
            <person name="Parkhill J."/>
            <person name="Bentley S.D."/>
            <person name="Mitchell T.J."/>
        </authorList>
    </citation>
    <scope>NUCLEOTIDE SEQUENCE [LARGE SCALE GENOMIC DNA]</scope>
    <source>
        <strain>ATCC 700669 / Spain 23F-1</strain>
    </source>
</reference>
<dbReference type="EC" id="2.1.3.15" evidence="1"/>
<dbReference type="EMBL" id="FM211187">
    <property type="protein sequence ID" value="CAR68251.1"/>
    <property type="molecule type" value="Genomic_DNA"/>
</dbReference>
<dbReference type="RefSeq" id="WP_001017399.1">
    <property type="nucleotide sequence ID" value="NC_011900.1"/>
</dbReference>
<dbReference type="SMR" id="B8ZLJ3"/>
<dbReference type="KEGG" id="sne:SPN23F04020"/>
<dbReference type="HOGENOM" id="CLU_015486_0_2_9"/>
<dbReference type="UniPathway" id="UPA00655">
    <property type="reaction ID" value="UER00711"/>
</dbReference>
<dbReference type="GO" id="GO:0009317">
    <property type="term" value="C:acetyl-CoA carboxylase complex"/>
    <property type="evidence" value="ECO:0007669"/>
    <property type="project" value="InterPro"/>
</dbReference>
<dbReference type="GO" id="GO:0003989">
    <property type="term" value="F:acetyl-CoA carboxylase activity"/>
    <property type="evidence" value="ECO:0007669"/>
    <property type="project" value="InterPro"/>
</dbReference>
<dbReference type="GO" id="GO:0005524">
    <property type="term" value="F:ATP binding"/>
    <property type="evidence" value="ECO:0007669"/>
    <property type="project" value="UniProtKB-KW"/>
</dbReference>
<dbReference type="GO" id="GO:0016743">
    <property type="term" value="F:carboxyl- or carbamoyltransferase activity"/>
    <property type="evidence" value="ECO:0007669"/>
    <property type="project" value="UniProtKB-UniRule"/>
</dbReference>
<dbReference type="GO" id="GO:0006633">
    <property type="term" value="P:fatty acid biosynthetic process"/>
    <property type="evidence" value="ECO:0007669"/>
    <property type="project" value="UniProtKB-KW"/>
</dbReference>
<dbReference type="GO" id="GO:2001295">
    <property type="term" value="P:malonyl-CoA biosynthetic process"/>
    <property type="evidence" value="ECO:0007669"/>
    <property type="project" value="UniProtKB-UniRule"/>
</dbReference>
<dbReference type="Gene3D" id="3.90.226.10">
    <property type="entry name" value="2-enoyl-CoA Hydratase, Chain A, domain 1"/>
    <property type="match status" value="1"/>
</dbReference>
<dbReference type="HAMAP" id="MF_00823">
    <property type="entry name" value="AcetylCoA_CT_alpha"/>
    <property type="match status" value="1"/>
</dbReference>
<dbReference type="InterPro" id="IPR001095">
    <property type="entry name" value="Acetyl_CoA_COase_a_su"/>
</dbReference>
<dbReference type="InterPro" id="IPR029045">
    <property type="entry name" value="ClpP/crotonase-like_dom_sf"/>
</dbReference>
<dbReference type="InterPro" id="IPR011763">
    <property type="entry name" value="COA_CT_C"/>
</dbReference>
<dbReference type="NCBIfam" id="TIGR00513">
    <property type="entry name" value="accA"/>
    <property type="match status" value="1"/>
</dbReference>
<dbReference type="NCBIfam" id="NF041504">
    <property type="entry name" value="AccA_sub"/>
    <property type="match status" value="1"/>
</dbReference>
<dbReference type="NCBIfam" id="NF004344">
    <property type="entry name" value="PRK05724.1"/>
    <property type="match status" value="1"/>
</dbReference>
<dbReference type="NCBIfam" id="NF008971">
    <property type="entry name" value="PRK12319.1"/>
    <property type="match status" value="1"/>
</dbReference>
<dbReference type="PANTHER" id="PTHR42853">
    <property type="entry name" value="ACETYL-COENZYME A CARBOXYLASE CARBOXYL TRANSFERASE SUBUNIT ALPHA"/>
    <property type="match status" value="1"/>
</dbReference>
<dbReference type="PANTHER" id="PTHR42853:SF3">
    <property type="entry name" value="ACETYL-COENZYME A CARBOXYLASE CARBOXYL TRANSFERASE SUBUNIT ALPHA, CHLOROPLASTIC"/>
    <property type="match status" value="1"/>
</dbReference>
<dbReference type="Pfam" id="PF03255">
    <property type="entry name" value="ACCA"/>
    <property type="match status" value="1"/>
</dbReference>
<dbReference type="PRINTS" id="PR01069">
    <property type="entry name" value="ACCCTRFRASEA"/>
</dbReference>
<dbReference type="SUPFAM" id="SSF52096">
    <property type="entry name" value="ClpP/crotonase"/>
    <property type="match status" value="1"/>
</dbReference>
<dbReference type="PROSITE" id="PS50989">
    <property type="entry name" value="COA_CT_CTER"/>
    <property type="match status" value="1"/>
</dbReference>